<sequence length="359" mass="39006">MPEHDPHQENRTVSSVRLEDDAAEASLRPQSLAEFIGQRASRENLSIFIQAAKARGEAMDHVLLHGPPGLGKTTLAQIVSRELGVGFRATSGPVIQRAGDLAAILTNLQPRDVLFIDEIHRLQPAIEEVLYPAMEDFQLDLIIGEGPAARSVRIDLAPFTLVAATTRAGLLATPLRDRFGIPLRLIFYTASELELIVSRGAEKLGFDLSREGAAEIARRSRGTPRIAGRLLRRVRDFAMVQGVSPVDRSTADAALQRLEVDSLGLDAMDRRYLHRIAVHHAGGPVGVETLAAALAEARDTLEDVIEPYLIQEGLILRTSRGRMLGEAGWRHLGLVPPPSAAGGQPDMLTLLHRDGSADE</sequence>
<feature type="chain" id="PRO_0000322797" description="Holliday junction branch migration complex subunit RuvB">
    <location>
        <begin position="1"/>
        <end position="359"/>
    </location>
</feature>
<feature type="region of interest" description="Disordered" evidence="2">
    <location>
        <begin position="1"/>
        <end position="20"/>
    </location>
</feature>
<feature type="region of interest" description="Large ATPase domain (RuvB-L)" evidence="1">
    <location>
        <begin position="4"/>
        <end position="188"/>
    </location>
</feature>
<feature type="region of interest" description="Small ATPAse domain (RuvB-S)" evidence="1">
    <location>
        <begin position="189"/>
        <end position="259"/>
    </location>
</feature>
<feature type="region of interest" description="Head domain (RuvB-H)" evidence="1">
    <location>
        <begin position="262"/>
        <end position="359"/>
    </location>
</feature>
<feature type="compositionally biased region" description="Basic and acidic residues" evidence="2">
    <location>
        <begin position="1"/>
        <end position="10"/>
    </location>
</feature>
<feature type="binding site" evidence="1">
    <location>
        <position position="27"/>
    </location>
    <ligand>
        <name>ATP</name>
        <dbReference type="ChEBI" id="CHEBI:30616"/>
    </ligand>
</feature>
<feature type="binding site" evidence="1">
    <location>
        <position position="28"/>
    </location>
    <ligand>
        <name>ATP</name>
        <dbReference type="ChEBI" id="CHEBI:30616"/>
    </ligand>
</feature>
<feature type="binding site" evidence="1">
    <location>
        <position position="69"/>
    </location>
    <ligand>
        <name>ATP</name>
        <dbReference type="ChEBI" id="CHEBI:30616"/>
    </ligand>
</feature>
<feature type="binding site" evidence="1">
    <location>
        <position position="72"/>
    </location>
    <ligand>
        <name>ATP</name>
        <dbReference type="ChEBI" id="CHEBI:30616"/>
    </ligand>
</feature>
<feature type="binding site" evidence="1">
    <location>
        <position position="73"/>
    </location>
    <ligand>
        <name>ATP</name>
        <dbReference type="ChEBI" id="CHEBI:30616"/>
    </ligand>
</feature>
<feature type="binding site" evidence="1">
    <location>
        <position position="73"/>
    </location>
    <ligand>
        <name>Mg(2+)</name>
        <dbReference type="ChEBI" id="CHEBI:18420"/>
    </ligand>
</feature>
<feature type="binding site" evidence="1">
    <location>
        <position position="74"/>
    </location>
    <ligand>
        <name>ATP</name>
        <dbReference type="ChEBI" id="CHEBI:30616"/>
    </ligand>
</feature>
<feature type="binding site" evidence="1">
    <location>
        <begin position="135"/>
        <end position="137"/>
    </location>
    <ligand>
        <name>ATP</name>
        <dbReference type="ChEBI" id="CHEBI:30616"/>
    </ligand>
</feature>
<feature type="binding site" evidence="1">
    <location>
        <position position="178"/>
    </location>
    <ligand>
        <name>ATP</name>
        <dbReference type="ChEBI" id="CHEBI:30616"/>
    </ligand>
</feature>
<feature type="binding site" evidence="1">
    <location>
        <position position="188"/>
    </location>
    <ligand>
        <name>ATP</name>
        <dbReference type="ChEBI" id="CHEBI:30616"/>
    </ligand>
</feature>
<feature type="binding site" evidence="1">
    <location>
        <position position="225"/>
    </location>
    <ligand>
        <name>ATP</name>
        <dbReference type="ChEBI" id="CHEBI:30616"/>
    </ligand>
</feature>
<feature type="binding site" evidence="1">
    <location>
        <position position="298"/>
    </location>
    <ligand>
        <name>DNA</name>
        <dbReference type="ChEBI" id="CHEBI:16991"/>
    </ligand>
</feature>
<feature type="binding site" evidence="1">
    <location>
        <position position="317"/>
    </location>
    <ligand>
        <name>DNA</name>
        <dbReference type="ChEBI" id="CHEBI:16991"/>
    </ligand>
</feature>
<feature type="binding site" evidence="1">
    <location>
        <position position="322"/>
    </location>
    <ligand>
        <name>DNA</name>
        <dbReference type="ChEBI" id="CHEBI:16991"/>
    </ligand>
</feature>
<proteinExistence type="inferred from homology"/>
<reference key="1">
    <citation type="journal article" date="2007" name="J. Bacteriol.">
        <title>Genome sequence analysis of the emerging human pathogenic acetic acid bacterium Granulibacter bethesdensis.</title>
        <authorList>
            <person name="Greenberg D.E."/>
            <person name="Porcella S.F."/>
            <person name="Zelazny A.M."/>
            <person name="Virtaneva K."/>
            <person name="Sturdevant D.E."/>
            <person name="Kupko J.J. III"/>
            <person name="Barbian K.D."/>
            <person name="Babar A."/>
            <person name="Dorward D.W."/>
            <person name="Holland S.M."/>
        </authorList>
    </citation>
    <scope>NUCLEOTIDE SEQUENCE [LARGE SCALE GENOMIC DNA]</scope>
    <source>
        <strain>ATCC BAA-1260 / CGDNIH1</strain>
    </source>
</reference>
<keyword id="KW-0067">ATP-binding</keyword>
<keyword id="KW-0963">Cytoplasm</keyword>
<keyword id="KW-0227">DNA damage</keyword>
<keyword id="KW-0233">DNA recombination</keyword>
<keyword id="KW-0234">DNA repair</keyword>
<keyword id="KW-0238">DNA-binding</keyword>
<keyword id="KW-0378">Hydrolase</keyword>
<keyword id="KW-0547">Nucleotide-binding</keyword>
<keyword id="KW-1185">Reference proteome</keyword>
<dbReference type="EC" id="3.6.4.-" evidence="1"/>
<dbReference type="EMBL" id="CP000394">
    <property type="protein sequence ID" value="ABI61999.1"/>
    <property type="molecule type" value="Genomic_DNA"/>
</dbReference>
<dbReference type="RefSeq" id="WP_011631808.1">
    <property type="nucleotide sequence ID" value="NC_008343.2"/>
</dbReference>
<dbReference type="SMR" id="Q0BT53"/>
<dbReference type="STRING" id="391165.GbCGDNIH1_1101"/>
<dbReference type="KEGG" id="gbe:GbCGDNIH1_1101"/>
<dbReference type="eggNOG" id="COG2255">
    <property type="taxonomic scope" value="Bacteria"/>
</dbReference>
<dbReference type="HOGENOM" id="CLU_055599_1_0_5"/>
<dbReference type="OrthoDB" id="9804478at2"/>
<dbReference type="Proteomes" id="UP000001963">
    <property type="component" value="Chromosome"/>
</dbReference>
<dbReference type="GO" id="GO:0005737">
    <property type="term" value="C:cytoplasm"/>
    <property type="evidence" value="ECO:0007669"/>
    <property type="project" value="UniProtKB-SubCell"/>
</dbReference>
<dbReference type="GO" id="GO:0048476">
    <property type="term" value="C:Holliday junction resolvase complex"/>
    <property type="evidence" value="ECO:0007669"/>
    <property type="project" value="UniProtKB-UniRule"/>
</dbReference>
<dbReference type="GO" id="GO:0005524">
    <property type="term" value="F:ATP binding"/>
    <property type="evidence" value="ECO:0007669"/>
    <property type="project" value="UniProtKB-UniRule"/>
</dbReference>
<dbReference type="GO" id="GO:0016887">
    <property type="term" value="F:ATP hydrolysis activity"/>
    <property type="evidence" value="ECO:0007669"/>
    <property type="project" value="InterPro"/>
</dbReference>
<dbReference type="GO" id="GO:0000400">
    <property type="term" value="F:four-way junction DNA binding"/>
    <property type="evidence" value="ECO:0007669"/>
    <property type="project" value="UniProtKB-UniRule"/>
</dbReference>
<dbReference type="GO" id="GO:0009378">
    <property type="term" value="F:four-way junction helicase activity"/>
    <property type="evidence" value="ECO:0007669"/>
    <property type="project" value="InterPro"/>
</dbReference>
<dbReference type="GO" id="GO:0006310">
    <property type="term" value="P:DNA recombination"/>
    <property type="evidence" value="ECO:0007669"/>
    <property type="project" value="UniProtKB-UniRule"/>
</dbReference>
<dbReference type="GO" id="GO:0006281">
    <property type="term" value="P:DNA repair"/>
    <property type="evidence" value="ECO:0007669"/>
    <property type="project" value="UniProtKB-UniRule"/>
</dbReference>
<dbReference type="CDD" id="cd00009">
    <property type="entry name" value="AAA"/>
    <property type="match status" value="1"/>
</dbReference>
<dbReference type="Gene3D" id="1.10.8.60">
    <property type="match status" value="1"/>
</dbReference>
<dbReference type="Gene3D" id="3.40.50.300">
    <property type="entry name" value="P-loop containing nucleotide triphosphate hydrolases"/>
    <property type="match status" value="1"/>
</dbReference>
<dbReference type="Gene3D" id="1.10.10.10">
    <property type="entry name" value="Winged helix-like DNA-binding domain superfamily/Winged helix DNA-binding domain"/>
    <property type="match status" value="1"/>
</dbReference>
<dbReference type="HAMAP" id="MF_00016">
    <property type="entry name" value="DNA_HJ_migration_RuvB"/>
    <property type="match status" value="1"/>
</dbReference>
<dbReference type="InterPro" id="IPR003593">
    <property type="entry name" value="AAA+_ATPase"/>
</dbReference>
<dbReference type="InterPro" id="IPR041445">
    <property type="entry name" value="AAA_lid_4"/>
</dbReference>
<dbReference type="InterPro" id="IPR004605">
    <property type="entry name" value="DNA_helicase_Holl-junc_RuvB"/>
</dbReference>
<dbReference type="InterPro" id="IPR027417">
    <property type="entry name" value="P-loop_NTPase"/>
</dbReference>
<dbReference type="InterPro" id="IPR008824">
    <property type="entry name" value="RuvB-like_N"/>
</dbReference>
<dbReference type="InterPro" id="IPR008823">
    <property type="entry name" value="RuvB_C"/>
</dbReference>
<dbReference type="InterPro" id="IPR036388">
    <property type="entry name" value="WH-like_DNA-bd_sf"/>
</dbReference>
<dbReference type="InterPro" id="IPR036390">
    <property type="entry name" value="WH_DNA-bd_sf"/>
</dbReference>
<dbReference type="NCBIfam" id="NF000868">
    <property type="entry name" value="PRK00080.1"/>
    <property type="match status" value="1"/>
</dbReference>
<dbReference type="NCBIfam" id="TIGR00635">
    <property type="entry name" value="ruvB"/>
    <property type="match status" value="1"/>
</dbReference>
<dbReference type="PANTHER" id="PTHR42848">
    <property type="match status" value="1"/>
</dbReference>
<dbReference type="PANTHER" id="PTHR42848:SF1">
    <property type="entry name" value="HOLLIDAY JUNCTION BRANCH MIGRATION COMPLEX SUBUNIT RUVB"/>
    <property type="match status" value="1"/>
</dbReference>
<dbReference type="Pfam" id="PF17864">
    <property type="entry name" value="AAA_lid_4"/>
    <property type="match status" value="1"/>
</dbReference>
<dbReference type="Pfam" id="PF05491">
    <property type="entry name" value="RuvB_C"/>
    <property type="match status" value="1"/>
</dbReference>
<dbReference type="Pfam" id="PF05496">
    <property type="entry name" value="RuvB_N"/>
    <property type="match status" value="1"/>
</dbReference>
<dbReference type="SMART" id="SM00382">
    <property type="entry name" value="AAA"/>
    <property type="match status" value="1"/>
</dbReference>
<dbReference type="SUPFAM" id="SSF52540">
    <property type="entry name" value="P-loop containing nucleoside triphosphate hydrolases"/>
    <property type="match status" value="1"/>
</dbReference>
<dbReference type="SUPFAM" id="SSF46785">
    <property type="entry name" value="Winged helix' DNA-binding domain"/>
    <property type="match status" value="1"/>
</dbReference>
<name>RUVB_GRABC</name>
<accession>Q0BT53</accession>
<comment type="function">
    <text evidence="1">The RuvA-RuvB-RuvC complex processes Holliday junction (HJ) DNA during genetic recombination and DNA repair, while the RuvA-RuvB complex plays an important role in the rescue of blocked DNA replication forks via replication fork reversal (RFR). RuvA specifically binds to HJ cruciform DNA, conferring on it an open structure. The RuvB hexamer acts as an ATP-dependent pump, pulling dsDNA into and through the RuvAB complex. RuvB forms 2 homohexamers on either side of HJ DNA bound by 1 or 2 RuvA tetramers; 4 subunits per hexamer contact DNA at a time. Coordinated motions by a converter formed by DNA-disengaged RuvB subunits stimulates ATP hydrolysis and nucleotide exchange. Immobilization of the converter enables RuvB to convert the ATP-contained energy into a lever motion, pulling 2 nucleotides of DNA out of the RuvA tetramer per ATP hydrolyzed, thus driving DNA branch migration. The RuvB motors rotate together with the DNA substrate, which together with the progressing nucleotide cycle form the mechanistic basis for DNA recombination by continuous HJ branch migration. Branch migration allows RuvC to scan DNA until it finds its consensus sequence, where it cleaves and resolves cruciform DNA.</text>
</comment>
<comment type="catalytic activity">
    <reaction evidence="1">
        <text>ATP + H2O = ADP + phosphate + H(+)</text>
        <dbReference type="Rhea" id="RHEA:13065"/>
        <dbReference type="ChEBI" id="CHEBI:15377"/>
        <dbReference type="ChEBI" id="CHEBI:15378"/>
        <dbReference type="ChEBI" id="CHEBI:30616"/>
        <dbReference type="ChEBI" id="CHEBI:43474"/>
        <dbReference type="ChEBI" id="CHEBI:456216"/>
    </reaction>
</comment>
<comment type="subunit">
    <text evidence="1">Homohexamer. Forms an RuvA(8)-RuvB(12)-Holliday junction (HJ) complex. HJ DNA is sandwiched between 2 RuvA tetramers; dsDNA enters through RuvA and exits via RuvB. An RuvB hexamer assembles on each DNA strand where it exits the tetramer. Each RuvB hexamer is contacted by two RuvA subunits (via domain III) on 2 adjacent RuvB subunits; this complex drives branch migration. In the full resolvosome a probable DNA-RuvA(4)-RuvB(12)-RuvC(2) complex forms which resolves the HJ.</text>
</comment>
<comment type="subcellular location">
    <subcellularLocation>
        <location evidence="1">Cytoplasm</location>
    </subcellularLocation>
</comment>
<comment type="domain">
    <text evidence="1">Has 3 domains, the large (RuvB-L) and small ATPase (RuvB-S) domains and the C-terminal head (RuvB-H) domain. The head domain binds DNA, while the ATPase domains jointly bind ATP, ADP or are empty depending on the state of the subunit in the translocation cycle. During a single DNA translocation step the structure of each domain remains the same, but their relative positions change.</text>
</comment>
<comment type="similarity">
    <text evidence="1">Belongs to the RuvB family.</text>
</comment>
<organism>
    <name type="scientific">Granulibacter bethesdensis (strain ATCC BAA-1260 / CGDNIH1)</name>
    <dbReference type="NCBI Taxonomy" id="391165"/>
    <lineage>
        <taxon>Bacteria</taxon>
        <taxon>Pseudomonadati</taxon>
        <taxon>Pseudomonadota</taxon>
        <taxon>Alphaproteobacteria</taxon>
        <taxon>Acetobacterales</taxon>
        <taxon>Acetobacteraceae</taxon>
        <taxon>Granulibacter</taxon>
    </lineage>
</organism>
<evidence type="ECO:0000255" key="1">
    <source>
        <dbReference type="HAMAP-Rule" id="MF_00016"/>
    </source>
</evidence>
<evidence type="ECO:0000256" key="2">
    <source>
        <dbReference type="SAM" id="MobiDB-lite"/>
    </source>
</evidence>
<gene>
    <name evidence="1" type="primary">ruvB</name>
    <name type="ordered locus">GbCGDNIH1_1101</name>
</gene>
<protein>
    <recommendedName>
        <fullName evidence="1">Holliday junction branch migration complex subunit RuvB</fullName>
        <ecNumber evidence="1">3.6.4.-</ecNumber>
    </recommendedName>
</protein>